<comment type="function">
    <text evidence="1 8">Regulatory subunit of glucosidase II that cleaves sequentially the 2 innermost alpha-1,3-linked glucose residues from the Glc(2)Man(9)GlcNAc(2) oligosaccharide precursor of immature glycoproteins (PubMed:10929008). Required for efficient PKD1/Polycystin-1 biogenesis and trafficking to the plasma membrane of the primary cilia (By similarity).</text>
</comment>
<comment type="pathway">
    <text evidence="8">Glycan metabolism; N-glycan metabolism.</text>
</comment>
<comment type="subunit">
    <text evidence="1 8">Heterodimer of a catalytic alpha subunit (GANAB) and a beta subunit (PRKCSH) (PubMed:10929008). Binds glycosylated PTPRC (By similarity).</text>
</comment>
<comment type="interaction">
    <interactant intactId="EBI-716953">
        <id>P14314</id>
    </interactant>
    <interactant intactId="EBI-11614043">
        <id>Q14697-1</id>
        <label>GANAB</label>
    </interactant>
    <organismsDiffer>false</organismsDiffer>
    <experiments>3</experiments>
</comment>
<comment type="interaction">
    <interactant intactId="EBI-716953">
        <id>P14314</id>
    </interactant>
    <interactant intactId="EBI-16399534">
        <id>Q14697-2</id>
        <label>GANAB</label>
    </interactant>
    <organismsDiffer>false</organismsDiffer>
    <experiments>2</experiments>
</comment>
<comment type="subcellular location">
    <subcellularLocation>
        <location evidence="6 21">Endoplasmic reticulum</location>
    </subcellularLocation>
</comment>
<comment type="alternative products">
    <event type="alternative splicing"/>
    <isoform>
        <id>P14314-1</id>
        <name>1</name>
        <sequence type="displayed"/>
    </isoform>
    <isoform>
        <id>P14314-2</id>
        <name>2</name>
        <sequence type="described" ref="VSP_043749"/>
    </isoform>
</comment>
<comment type="disease" evidence="9 10 14">
    <disease id="DI-02175">
        <name>Polycystic liver disease 1 with or without kidney cysts</name>
        <acronym>PCLD1</acronym>
        <description>An autosomal dominant hepatobiliary disease characterized by overgrowth of biliary epithelium and supportive connective tissue, resulting in multiple liver cysts. A subset of patients may develop kidney cysts that usually do not result in clinically significant renal disease.</description>
        <dbReference type="MIM" id="174050"/>
    </disease>
    <text>The disease is caused by variants affecting the gene represented in this entry.</text>
</comment>
<comment type="sequence caution" evidence="20">
    <conflict type="erroneous initiation">
        <sequence resource="EMBL-CDS" id="AAH15154"/>
    </conflict>
</comment>
<name>GLU2B_HUMAN</name>
<dbReference type="EMBL" id="J03075">
    <property type="protein sequence ID" value="AAA52493.1"/>
    <property type="molecule type" value="mRNA"/>
</dbReference>
<dbReference type="EMBL" id="U50326">
    <property type="protein sequence ID" value="AAA98668.1"/>
    <property type="molecule type" value="Genomic_DNA"/>
</dbReference>
<dbReference type="EMBL" id="U50317">
    <property type="protein sequence ID" value="AAA98668.1"/>
    <property type="status" value="JOINED"/>
    <property type="molecule type" value="Genomic_DNA"/>
</dbReference>
<dbReference type="EMBL" id="U50318">
    <property type="protein sequence ID" value="AAA98668.1"/>
    <property type="status" value="JOINED"/>
    <property type="molecule type" value="Genomic_DNA"/>
</dbReference>
<dbReference type="EMBL" id="U50319">
    <property type="protein sequence ID" value="AAA98668.1"/>
    <property type="status" value="JOINED"/>
    <property type="molecule type" value="Genomic_DNA"/>
</dbReference>
<dbReference type="EMBL" id="U50320">
    <property type="protein sequence ID" value="AAA98668.1"/>
    <property type="status" value="JOINED"/>
    <property type="molecule type" value="Genomic_DNA"/>
</dbReference>
<dbReference type="EMBL" id="U50321">
    <property type="protein sequence ID" value="AAA98668.1"/>
    <property type="status" value="JOINED"/>
    <property type="molecule type" value="Genomic_DNA"/>
</dbReference>
<dbReference type="EMBL" id="U50322">
    <property type="protein sequence ID" value="AAA98668.1"/>
    <property type="status" value="JOINED"/>
    <property type="molecule type" value="Genomic_DNA"/>
</dbReference>
<dbReference type="EMBL" id="U50323">
    <property type="protein sequence ID" value="AAA98668.1"/>
    <property type="status" value="JOINED"/>
    <property type="molecule type" value="Genomic_DNA"/>
</dbReference>
<dbReference type="EMBL" id="U50324">
    <property type="protein sequence ID" value="AAA98668.1"/>
    <property type="status" value="JOINED"/>
    <property type="molecule type" value="Genomic_DNA"/>
</dbReference>
<dbReference type="EMBL" id="U50325">
    <property type="protein sequence ID" value="AAA98668.1"/>
    <property type="status" value="JOINED"/>
    <property type="molecule type" value="Genomic_DNA"/>
</dbReference>
<dbReference type="EMBL" id="AF144075">
    <property type="protein sequence ID" value="AAF66686.1"/>
    <property type="molecule type" value="mRNA"/>
</dbReference>
<dbReference type="EMBL" id="BT009858">
    <property type="protein sequence ID" value="AAP88860.1"/>
    <property type="molecule type" value="mRNA"/>
</dbReference>
<dbReference type="EMBL" id="AK290433">
    <property type="protein sequence ID" value="BAF83122.1"/>
    <property type="molecule type" value="mRNA"/>
</dbReference>
<dbReference type="EMBL" id="AC008481">
    <property type="status" value="NOT_ANNOTATED_CDS"/>
    <property type="molecule type" value="Genomic_DNA"/>
</dbReference>
<dbReference type="EMBL" id="AC024575">
    <property type="status" value="NOT_ANNOTATED_CDS"/>
    <property type="molecule type" value="Genomic_DNA"/>
</dbReference>
<dbReference type="EMBL" id="BC013586">
    <property type="protein sequence ID" value="AAH13586.2"/>
    <property type="molecule type" value="mRNA"/>
</dbReference>
<dbReference type="EMBL" id="BC015154">
    <property type="protein sequence ID" value="AAH15154.1"/>
    <property type="status" value="ALT_INIT"/>
    <property type="molecule type" value="mRNA"/>
</dbReference>
<dbReference type="CCDS" id="CCDS32911.1">
    <molecule id="P14314-1"/>
</dbReference>
<dbReference type="CCDS" id="CCDS45977.1">
    <molecule id="P14314-2"/>
</dbReference>
<dbReference type="PIR" id="A32469">
    <property type="entry name" value="A32469"/>
</dbReference>
<dbReference type="RefSeq" id="NP_001001329.1">
    <molecule id="P14314-2"/>
    <property type="nucleotide sequence ID" value="NM_001001329.3"/>
</dbReference>
<dbReference type="RefSeq" id="NP_001276031.1">
    <molecule id="P14314-2"/>
    <property type="nucleotide sequence ID" value="NM_001289102.2"/>
</dbReference>
<dbReference type="RefSeq" id="NP_001366537.1">
    <molecule id="P14314-1"/>
    <property type="nucleotide sequence ID" value="NM_001379608.1"/>
</dbReference>
<dbReference type="RefSeq" id="NP_001366538.1">
    <molecule id="P14314-2"/>
    <property type="nucleotide sequence ID" value="NM_001379609.1"/>
</dbReference>
<dbReference type="RefSeq" id="NP_002734.2">
    <molecule id="P14314-1"/>
    <property type="nucleotide sequence ID" value="NM_002743.3"/>
</dbReference>
<dbReference type="RefSeq" id="XP_011526433.1">
    <property type="nucleotide sequence ID" value="XM_011528131.1"/>
</dbReference>
<dbReference type="RefSeq" id="XP_011526434.1">
    <property type="nucleotide sequence ID" value="XM_011528132.1"/>
</dbReference>
<dbReference type="RefSeq" id="XP_016882466.1">
    <property type="nucleotide sequence ID" value="XM_017026977.1"/>
</dbReference>
<dbReference type="PDB" id="8D43">
    <property type="method" value="EM"/>
    <property type="resolution" value="2.88 A"/>
    <property type="chains" value="B=1-528"/>
</dbReference>
<dbReference type="PDB" id="8EMR">
    <property type="method" value="EM"/>
    <property type="resolution" value="2.92 A"/>
    <property type="chains" value="B=1-528"/>
</dbReference>
<dbReference type="PDBsum" id="8D43"/>
<dbReference type="PDBsum" id="8EMR"/>
<dbReference type="EMDB" id="EMD-27173"/>
<dbReference type="EMDB" id="EMD-28262"/>
<dbReference type="SMR" id="P14314"/>
<dbReference type="BioGRID" id="111575">
    <property type="interactions" value="279"/>
</dbReference>
<dbReference type="ComplexPortal" id="CPX-6822">
    <property type="entry name" value="Glucosidase II complex"/>
</dbReference>
<dbReference type="FunCoup" id="P14314">
    <property type="interactions" value="3637"/>
</dbReference>
<dbReference type="IntAct" id="P14314">
    <property type="interactions" value="97"/>
</dbReference>
<dbReference type="MINT" id="P14314"/>
<dbReference type="STRING" id="9606.ENSP00000466134"/>
<dbReference type="GlyConnect" id="1269">
    <property type="glycosylation" value="8 N-Linked glycans (2 sites)"/>
</dbReference>
<dbReference type="GlyCosmos" id="P14314">
    <property type="glycosylation" value="9 sites, 14 glycans"/>
</dbReference>
<dbReference type="GlyGen" id="P14314">
    <property type="glycosylation" value="14 sites, 23 N-linked glycans (2 sites), 7 O-linked glycans (10 sites)"/>
</dbReference>
<dbReference type="iPTMnet" id="P14314"/>
<dbReference type="MetOSite" id="P14314"/>
<dbReference type="PhosphoSitePlus" id="P14314"/>
<dbReference type="SwissPalm" id="P14314"/>
<dbReference type="BioMuta" id="PRKCSH"/>
<dbReference type="DMDM" id="116242499"/>
<dbReference type="CPTAC" id="CPTAC-574"/>
<dbReference type="CPTAC" id="CPTAC-575"/>
<dbReference type="jPOST" id="P14314"/>
<dbReference type="MassIVE" id="P14314"/>
<dbReference type="PaxDb" id="9606-ENSP00000466134"/>
<dbReference type="PeptideAtlas" id="P14314"/>
<dbReference type="ProteomicsDB" id="53041">
    <molecule id="P14314-1"/>
</dbReference>
<dbReference type="ProteomicsDB" id="53042">
    <molecule id="P14314-2"/>
</dbReference>
<dbReference type="Pumba" id="P14314"/>
<dbReference type="TopDownProteomics" id="P14314-1">
    <molecule id="P14314-1"/>
</dbReference>
<dbReference type="TopDownProteomics" id="P14314-2">
    <molecule id="P14314-2"/>
</dbReference>
<dbReference type="Antibodypedia" id="3848">
    <property type="antibodies" value="313 antibodies from 34 providers"/>
</dbReference>
<dbReference type="DNASU" id="5589"/>
<dbReference type="Ensembl" id="ENST00000587327.5">
    <molecule id="P14314-2"/>
    <property type="protein sequence ID" value="ENSP00000466012.1"/>
    <property type="gene ID" value="ENSG00000130175.10"/>
</dbReference>
<dbReference type="Ensembl" id="ENST00000589838.5">
    <molecule id="P14314-1"/>
    <property type="protein sequence ID" value="ENSP00000465461.1"/>
    <property type="gene ID" value="ENSG00000130175.10"/>
</dbReference>
<dbReference type="Ensembl" id="ENST00000591462.6">
    <molecule id="P14314-2"/>
    <property type="protein sequence ID" value="ENSP00000465489.1"/>
    <property type="gene ID" value="ENSG00000130175.10"/>
</dbReference>
<dbReference type="GeneID" id="5589"/>
<dbReference type="KEGG" id="hsa:5589"/>
<dbReference type="UCSC" id="uc010dyb.5">
    <molecule id="P14314-1"/>
    <property type="organism name" value="human"/>
</dbReference>
<dbReference type="AGR" id="HGNC:9411"/>
<dbReference type="CTD" id="5589"/>
<dbReference type="DisGeNET" id="5589"/>
<dbReference type="GeneCards" id="PRKCSH"/>
<dbReference type="HGNC" id="HGNC:9411">
    <property type="gene designation" value="PRKCSH"/>
</dbReference>
<dbReference type="HPA" id="ENSG00000130175">
    <property type="expression patterns" value="Low tissue specificity"/>
</dbReference>
<dbReference type="MalaCards" id="PRKCSH"/>
<dbReference type="MIM" id="174050">
    <property type="type" value="phenotype"/>
</dbReference>
<dbReference type="MIM" id="177060">
    <property type="type" value="gene"/>
</dbReference>
<dbReference type="neXtProt" id="NX_P14314"/>
<dbReference type="OpenTargets" id="ENSG00000130175"/>
<dbReference type="Orphanet" id="2924">
    <property type="disease" value="Isolated polycystic liver disease"/>
</dbReference>
<dbReference type="PharmGKB" id="PA33774"/>
<dbReference type="VEuPathDB" id="HostDB:ENSG00000130175"/>
<dbReference type="eggNOG" id="KOG2397">
    <property type="taxonomic scope" value="Eukaryota"/>
</dbReference>
<dbReference type="GeneTree" id="ENSGT00510000047770"/>
<dbReference type="HOGENOM" id="CLU_016834_1_0_1"/>
<dbReference type="InParanoid" id="P14314"/>
<dbReference type="OrthoDB" id="28322at2759"/>
<dbReference type="PAN-GO" id="P14314">
    <property type="GO annotations" value="3 GO annotations based on evolutionary models"/>
</dbReference>
<dbReference type="PhylomeDB" id="P14314"/>
<dbReference type="TreeFam" id="TF329550"/>
<dbReference type="BioCyc" id="MetaCyc:HS05346-MONOMER"/>
<dbReference type="BRENDA" id="3.2.1.207">
    <property type="organism ID" value="2681"/>
</dbReference>
<dbReference type="PathwayCommons" id="P14314"/>
<dbReference type="Reactome" id="R-HSA-381426">
    <property type="pathway name" value="Regulation of Insulin-like Growth Factor (IGF) transport and uptake by Insulin-like Growth Factor Binding Proteins (IGFBPs)"/>
</dbReference>
<dbReference type="Reactome" id="R-HSA-532668">
    <property type="pathway name" value="N-glycan trimming in the ER and Calnexin/Calreticulin cycle"/>
</dbReference>
<dbReference type="Reactome" id="R-HSA-879415">
    <property type="pathway name" value="Advanced glycosylation endproduct receptor signaling"/>
</dbReference>
<dbReference type="Reactome" id="R-HSA-8957275">
    <property type="pathway name" value="Post-translational protein phosphorylation"/>
</dbReference>
<dbReference type="Reactome" id="R-HSA-901042">
    <property type="pathway name" value="Calnexin/calreticulin cycle"/>
</dbReference>
<dbReference type="Reactome" id="R-HSA-9683686">
    <property type="pathway name" value="Maturation of spike protein"/>
</dbReference>
<dbReference type="Reactome" id="R-HSA-9694548">
    <property type="pathway name" value="Maturation of spike protein"/>
</dbReference>
<dbReference type="SignaLink" id="P14314"/>
<dbReference type="UniPathway" id="UPA00957"/>
<dbReference type="BioGRID-ORCS" id="5589">
    <property type="hits" value="48 hits in 1158 CRISPR screens"/>
</dbReference>
<dbReference type="ChiTaRS" id="PRKCSH">
    <property type="organism name" value="human"/>
</dbReference>
<dbReference type="GeneWiki" id="PRKCSH"/>
<dbReference type="GenomeRNAi" id="5589"/>
<dbReference type="Pharos" id="P14314">
    <property type="development level" value="Tbio"/>
</dbReference>
<dbReference type="PRO" id="PR:P14314"/>
<dbReference type="Proteomes" id="UP000005640">
    <property type="component" value="Chromosome 19"/>
</dbReference>
<dbReference type="RNAct" id="P14314">
    <property type="molecule type" value="protein"/>
</dbReference>
<dbReference type="Bgee" id="ENSG00000130175">
    <property type="expression patterns" value="Expressed in stromal cell of endometrium and 205 other cell types or tissues"/>
</dbReference>
<dbReference type="ExpressionAtlas" id="P14314">
    <property type="expression patterns" value="baseline and differential"/>
</dbReference>
<dbReference type="GO" id="GO:0005783">
    <property type="term" value="C:endoplasmic reticulum"/>
    <property type="evidence" value="ECO:0000314"/>
    <property type="project" value="HPA"/>
</dbReference>
<dbReference type="GO" id="GO:0005788">
    <property type="term" value="C:endoplasmic reticulum lumen"/>
    <property type="evidence" value="ECO:0000304"/>
    <property type="project" value="Reactome"/>
</dbReference>
<dbReference type="GO" id="GO:0017177">
    <property type="term" value="C:glucosidase II complex"/>
    <property type="evidence" value="ECO:0000314"/>
    <property type="project" value="UniProtKB"/>
</dbReference>
<dbReference type="GO" id="GO:0043231">
    <property type="term" value="C:intracellular membrane-bounded organelle"/>
    <property type="evidence" value="ECO:0000315"/>
    <property type="project" value="UniProtKB"/>
</dbReference>
<dbReference type="GO" id="GO:0005509">
    <property type="term" value="F:calcium ion binding"/>
    <property type="evidence" value="ECO:0007669"/>
    <property type="project" value="InterPro"/>
</dbReference>
<dbReference type="GO" id="GO:0051219">
    <property type="term" value="F:phosphoprotein binding"/>
    <property type="evidence" value="ECO:0000353"/>
    <property type="project" value="UniProtKB"/>
</dbReference>
<dbReference type="GO" id="GO:0005080">
    <property type="term" value="F:protein kinase C binding"/>
    <property type="evidence" value="ECO:0000353"/>
    <property type="project" value="UniProtKB"/>
</dbReference>
<dbReference type="GO" id="GO:0044325">
    <property type="term" value="F:transmembrane transporter binding"/>
    <property type="evidence" value="ECO:0000353"/>
    <property type="project" value="UniProtKB"/>
</dbReference>
<dbReference type="GO" id="GO:0035556">
    <property type="term" value="P:intracellular signal transduction"/>
    <property type="evidence" value="ECO:0000303"/>
    <property type="project" value="UniProtKB"/>
</dbReference>
<dbReference type="GO" id="GO:0001889">
    <property type="term" value="P:liver development"/>
    <property type="evidence" value="ECO:0000318"/>
    <property type="project" value="GO_Central"/>
</dbReference>
<dbReference type="GO" id="GO:0006491">
    <property type="term" value="P:N-glycan processing"/>
    <property type="evidence" value="ECO:0000314"/>
    <property type="project" value="UniProtKB"/>
</dbReference>
<dbReference type="FunFam" id="4.10.400.10:FF:000150">
    <property type="entry name" value="Glucosidase 2 subunit beta"/>
    <property type="match status" value="1"/>
</dbReference>
<dbReference type="FunFam" id="2.70.130.10:FF:000014">
    <property type="entry name" value="glucosidase 2 subunit beta isoform X1"/>
    <property type="match status" value="1"/>
</dbReference>
<dbReference type="Gene3D" id="1.10.238.10">
    <property type="entry name" value="EF-hand"/>
    <property type="match status" value="1"/>
</dbReference>
<dbReference type="Gene3D" id="4.10.400.10">
    <property type="entry name" value="Low-density Lipoprotein Receptor"/>
    <property type="match status" value="1"/>
</dbReference>
<dbReference type="Gene3D" id="2.70.130.10">
    <property type="entry name" value="Mannose-6-phosphate receptor binding domain"/>
    <property type="match status" value="1"/>
</dbReference>
<dbReference type="InterPro" id="IPR011992">
    <property type="entry name" value="EF-hand-dom_pair"/>
</dbReference>
<dbReference type="InterPro" id="IPR018247">
    <property type="entry name" value="EF_Hand_1_Ca_BS"/>
</dbReference>
<dbReference type="InterPro" id="IPR002048">
    <property type="entry name" value="EF_hand_dom"/>
</dbReference>
<dbReference type="InterPro" id="IPR039794">
    <property type="entry name" value="Gtb1-like"/>
</dbReference>
<dbReference type="InterPro" id="IPR036055">
    <property type="entry name" value="LDL_receptor-like_sf"/>
</dbReference>
<dbReference type="InterPro" id="IPR009011">
    <property type="entry name" value="Man6P_isomerase_rcpt-bd_dom_sf"/>
</dbReference>
<dbReference type="InterPro" id="IPR044865">
    <property type="entry name" value="MRH_dom"/>
</dbReference>
<dbReference type="InterPro" id="IPR036607">
    <property type="entry name" value="PRKCSH"/>
</dbReference>
<dbReference type="InterPro" id="IPR028146">
    <property type="entry name" value="PRKCSH_N"/>
</dbReference>
<dbReference type="PANTHER" id="PTHR12630:SF1">
    <property type="entry name" value="GLUCOSIDASE 2 SUBUNIT BETA"/>
    <property type="match status" value="1"/>
</dbReference>
<dbReference type="PANTHER" id="PTHR12630">
    <property type="entry name" value="N-LINKED OLIGOSACCHARIDE PROCESSING"/>
    <property type="match status" value="1"/>
</dbReference>
<dbReference type="Pfam" id="PF13202">
    <property type="entry name" value="EF-hand_5"/>
    <property type="match status" value="1"/>
</dbReference>
<dbReference type="Pfam" id="PF12999">
    <property type="entry name" value="PRKCSH-like"/>
    <property type="match status" value="1"/>
</dbReference>
<dbReference type="Pfam" id="PF13015">
    <property type="entry name" value="PRKCSH_1"/>
    <property type="match status" value="1"/>
</dbReference>
<dbReference type="SUPFAM" id="SSF47473">
    <property type="entry name" value="EF-hand"/>
    <property type="match status" value="1"/>
</dbReference>
<dbReference type="SUPFAM" id="SSF57424">
    <property type="entry name" value="LDL receptor-like module"/>
    <property type="match status" value="1"/>
</dbReference>
<dbReference type="SUPFAM" id="SSF50911">
    <property type="entry name" value="Mannose 6-phosphate receptor domain"/>
    <property type="match status" value="1"/>
</dbReference>
<dbReference type="PROSITE" id="PS00018">
    <property type="entry name" value="EF_HAND_1"/>
    <property type="match status" value="1"/>
</dbReference>
<dbReference type="PROSITE" id="PS50222">
    <property type="entry name" value="EF_HAND_2"/>
    <property type="match status" value="1"/>
</dbReference>
<dbReference type="PROSITE" id="PS00014">
    <property type="entry name" value="ER_TARGET"/>
    <property type="match status" value="1"/>
</dbReference>
<dbReference type="PROSITE" id="PS51914">
    <property type="entry name" value="MRH"/>
    <property type="match status" value="1"/>
</dbReference>
<accession>P14314</accession>
<accession>A8K318</accession>
<accession>Q96BU9</accession>
<accession>Q96D06</accession>
<accession>Q9P0W9</accession>
<reference key="1">
    <citation type="journal article" date="1989" name="Genomics">
        <title>Isolation of cDNAs encoding a substrate for protein kinase C: nucleotide sequence and chromosomal mapping of the gene for a human 80K protein.</title>
        <authorList>
            <person name="Sakai K."/>
            <person name="Masamichi H."/>
            <person name="Minoshima S."/>
            <person name="Kudoh J."/>
            <person name="Fukuyama R."/>
            <person name="Shimizu N."/>
        </authorList>
    </citation>
    <scope>NUCLEOTIDE SEQUENCE [MRNA] (ISOFORM 1)</scope>
    <scope>PARTIAL PROTEIN SEQUENCE</scope>
</reference>
<reference key="2">
    <citation type="journal article" date="1996" name="Eur. J. Hum. Genet.">
        <title>A 3-Mb region for the familial hemiplegic migraine locus on 19p13.1-p13.2: exclusion of PRKCSH as a candidate gene.</title>
        <authorList>
            <person name="Ophoff R.A."/>
            <person name="Terwindt G.M."/>
            <person name="Vergouwe M.N."/>
            <person name="van Eijk R."/>
            <person name="Mohrenweiser H."/>
            <person name="Litt M."/>
            <person name="Hofker M.H."/>
            <person name="Haan J."/>
            <person name="Ferrari M.D."/>
            <person name="Frants R.R."/>
        </authorList>
    </citation>
    <scope>NUCLEOTIDE SEQUENCE [GENOMIC DNA]</scope>
</reference>
<reference key="3">
    <citation type="journal article" date="2000" name="Glycobiology">
        <title>The heterodimeric structure of glucosidase II is required for its activity, solubility, and localization in vivo.</title>
        <authorList>
            <person name="Pelletier M.F."/>
            <person name="Marcil A."/>
            <person name="Sevigny G."/>
            <person name="Jakob C.A."/>
            <person name="Tessier D.C."/>
            <person name="Chevet E."/>
            <person name="Menard R."/>
            <person name="Bergeron J.J.M."/>
            <person name="Thomas D.Y."/>
        </authorList>
    </citation>
    <scope>NUCLEOTIDE SEQUENCE [MRNA] (ISOFORM 1)</scope>
    <scope>FUNCTION</scope>
    <scope>PATHWAY</scope>
    <scope>INTERACTION WITH GANAB</scope>
    <scope>SUBCELLULAR LOCATION</scope>
    <source>
        <tissue>Lymphocyte</tissue>
    </source>
</reference>
<reference key="4">
    <citation type="submission" date="2003-08" db="EMBL/GenBank/DDBJ databases">
        <title>Cloning of human full-length CDSs in BD Creator(TM) system donor vector.</title>
        <authorList>
            <person name="Kalnine N."/>
            <person name="Chen X."/>
            <person name="Rolfs A."/>
            <person name="Halleck A."/>
            <person name="Hines L."/>
            <person name="Eisenstein S."/>
            <person name="Koundinya M."/>
            <person name="Raphael J."/>
            <person name="Moreira D."/>
            <person name="Kelley T."/>
            <person name="LaBaer J."/>
            <person name="Lin Y."/>
            <person name="Phelan M."/>
            <person name="Farmer A."/>
        </authorList>
    </citation>
    <scope>NUCLEOTIDE SEQUENCE [LARGE SCALE MRNA] OF 130-528 (ISOFORM 1)</scope>
    <scope>VARIANT THR-291</scope>
</reference>
<reference key="5">
    <citation type="journal article" date="2004" name="Nat. Genet.">
        <title>Complete sequencing and characterization of 21,243 full-length human cDNAs.</title>
        <authorList>
            <person name="Ota T."/>
            <person name="Suzuki Y."/>
            <person name="Nishikawa T."/>
            <person name="Otsuki T."/>
            <person name="Sugiyama T."/>
            <person name="Irie R."/>
            <person name="Wakamatsu A."/>
            <person name="Hayashi K."/>
            <person name="Sato H."/>
            <person name="Nagai K."/>
            <person name="Kimura K."/>
            <person name="Makita H."/>
            <person name="Sekine M."/>
            <person name="Obayashi M."/>
            <person name="Nishi T."/>
            <person name="Shibahara T."/>
            <person name="Tanaka T."/>
            <person name="Ishii S."/>
            <person name="Yamamoto J."/>
            <person name="Saito K."/>
            <person name="Kawai Y."/>
            <person name="Isono Y."/>
            <person name="Nakamura Y."/>
            <person name="Nagahari K."/>
            <person name="Murakami K."/>
            <person name="Yasuda T."/>
            <person name="Iwayanagi T."/>
            <person name="Wagatsuma M."/>
            <person name="Shiratori A."/>
            <person name="Sudo H."/>
            <person name="Hosoiri T."/>
            <person name="Kaku Y."/>
            <person name="Kodaira H."/>
            <person name="Kondo H."/>
            <person name="Sugawara M."/>
            <person name="Takahashi M."/>
            <person name="Kanda K."/>
            <person name="Yokoi T."/>
            <person name="Furuya T."/>
            <person name="Kikkawa E."/>
            <person name="Omura Y."/>
            <person name="Abe K."/>
            <person name="Kamihara K."/>
            <person name="Katsuta N."/>
            <person name="Sato K."/>
            <person name="Tanikawa M."/>
            <person name="Yamazaki M."/>
            <person name="Ninomiya K."/>
            <person name="Ishibashi T."/>
            <person name="Yamashita H."/>
            <person name="Murakawa K."/>
            <person name="Fujimori K."/>
            <person name="Tanai H."/>
            <person name="Kimata M."/>
            <person name="Watanabe M."/>
            <person name="Hiraoka S."/>
            <person name="Chiba Y."/>
            <person name="Ishida S."/>
            <person name="Ono Y."/>
            <person name="Takiguchi S."/>
            <person name="Watanabe S."/>
            <person name="Yosida M."/>
            <person name="Hotuta T."/>
            <person name="Kusano J."/>
            <person name="Kanehori K."/>
            <person name="Takahashi-Fujii A."/>
            <person name="Hara H."/>
            <person name="Tanase T.-O."/>
            <person name="Nomura Y."/>
            <person name="Togiya S."/>
            <person name="Komai F."/>
            <person name="Hara R."/>
            <person name="Takeuchi K."/>
            <person name="Arita M."/>
            <person name="Imose N."/>
            <person name="Musashino K."/>
            <person name="Yuuki H."/>
            <person name="Oshima A."/>
            <person name="Sasaki N."/>
            <person name="Aotsuka S."/>
            <person name="Yoshikawa Y."/>
            <person name="Matsunawa H."/>
            <person name="Ichihara T."/>
            <person name="Shiohata N."/>
            <person name="Sano S."/>
            <person name="Moriya S."/>
            <person name="Momiyama H."/>
            <person name="Satoh N."/>
            <person name="Takami S."/>
            <person name="Terashima Y."/>
            <person name="Suzuki O."/>
            <person name="Nakagawa S."/>
            <person name="Senoh A."/>
            <person name="Mizoguchi H."/>
            <person name="Goto Y."/>
            <person name="Shimizu F."/>
            <person name="Wakebe H."/>
            <person name="Hishigaki H."/>
            <person name="Watanabe T."/>
            <person name="Sugiyama A."/>
            <person name="Takemoto M."/>
            <person name="Kawakami B."/>
            <person name="Yamazaki M."/>
            <person name="Watanabe K."/>
            <person name="Kumagai A."/>
            <person name="Itakura S."/>
            <person name="Fukuzumi Y."/>
            <person name="Fujimori Y."/>
            <person name="Komiyama M."/>
            <person name="Tashiro H."/>
            <person name="Tanigami A."/>
            <person name="Fujiwara T."/>
            <person name="Ono T."/>
            <person name="Yamada K."/>
            <person name="Fujii Y."/>
            <person name="Ozaki K."/>
            <person name="Hirao M."/>
            <person name="Ohmori Y."/>
            <person name="Kawabata A."/>
            <person name="Hikiji T."/>
            <person name="Kobatake N."/>
            <person name="Inagaki H."/>
            <person name="Ikema Y."/>
            <person name="Okamoto S."/>
            <person name="Okitani R."/>
            <person name="Kawakami T."/>
            <person name="Noguchi S."/>
            <person name="Itoh T."/>
            <person name="Shigeta K."/>
            <person name="Senba T."/>
            <person name="Matsumura K."/>
            <person name="Nakajima Y."/>
            <person name="Mizuno T."/>
            <person name="Morinaga M."/>
            <person name="Sasaki M."/>
            <person name="Togashi T."/>
            <person name="Oyama M."/>
            <person name="Hata H."/>
            <person name="Watanabe M."/>
            <person name="Komatsu T."/>
            <person name="Mizushima-Sugano J."/>
            <person name="Satoh T."/>
            <person name="Shirai Y."/>
            <person name="Takahashi Y."/>
            <person name="Nakagawa K."/>
            <person name="Okumura K."/>
            <person name="Nagase T."/>
            <person name="Nomura N."/>
            <person name="Kikuchi H."/>
            <person name="Masuho Y."/>
            <person name="Yamashita R."/>
            <person name="Nakai K."/>
            <person name="Yada T."/>
            <person name="Nakamura Y."/>
            <person name="Ohara O."/>
            <person name="Isogai T."/>
            <person name="Sugano S."/>
        </authorList>
    </citation>
    <scope>NUCLEOTIDE SEQUENCE [LARGE SCALE MRNA] (ISOFORM 2)</scope>
</reference>
<reference key="6">
    <citation type="journal article" date="2004" name="Nature">
        <title>The DNA sequence and biology of human chromosome 19.</title>
        <authorList>
            <person name="Grimwood J."/>
            <person name="Gordon L.A."/>
            <person name="Olsen A.S."/>
            <person name="Terry A."/>
            <person name="Schmutz J."/>
            <person name="Lamerdin J.E."/>
            <person name="Hellsten U."/>
            <person name="Goodstein D."/>
            <person name="Couronne O."/>
            <person name="Tran-Gyamfi M."/>
            <person name="Aerts A."/>
            <person name="Altherr M."/>
            <person name="Ashworth L."/>
            <person name="Bajorek E."/>
            <person name="Black S."/>
            <person name="Branscomb E."/>
            <person name="Caenepeel S."/>
            <person name="Carrano A.V."/>
            <person name="Caoile C."/>
            <person name="Chan Y.M."/>
            <person name="Christensen M."/>
            <person name="Cleland C.A."/>
            <person name="Copeland A."/>
            <person name="Dalin E."/>
            <person name="Dehal P."/>
            <person name="Denys M."/>
            <person name="Detter J.C."/>
            <person name="Escobar J."/>
            <person name="Flowers D."/>
            <person name="Fotopulos D."/>
            <person name="Garcia C."/>
            <person name="Georgescu A.M."/>
            <person name="Glavina T."/>
            <person name="Gomez M."/>
            <person name="Gonzales E."/>
            <person name="Groza M."/>
            <person name="Hammon N."/>
            <person name="Hawkins T."/>
            <person name="Haydu L."/>
            <person name="Ho I."/>
            <person name="Huang W."/>
            <person name="Israni S."/>
            <person name="Jett J."/>
            <person name="Kadner K."/>
            <person name="Kimball H."/>
            <person name="Kobayashi A."/>
            <person name="Larionov V."/>
            <person name="Leem S.-H."/>
            <person name="Lopez F."/>
            <person name="Lou Y."/>
            <person name="Lowry S."/>
            <person name="Malfatti S."/>
            <person name="Martinez D."/>
            <person name="McCready P.M."/>
            <person name="Medina C."/>
            <person name="Morgan J."/>
            <person name="Nelson K."/>
            <person name="Nolan M."/>
            <person name="Ovcharenko I."/>
            <person name="Pitluck S."/>
            <person name="Pollard M."/>
            <person name="Popkie A.P."/>
            <person name="Predki P."/>
            <person name="Quan G."/>
            <person name="Ramirez L."/>
            <person name="Rash S."/>
            <person name="Retterer J."/>
            <person name="Rodriguez A."/>
            <person name="Rogers S."/>
            <person name="Salamov A."/>
            <person name="Salazar A."/>
            <person name="She X."/>
            <person name="Smith D."/>
            <person name="Slezak T."/>
            <person name="Solovyev V."/>
            <person name="Thayer N."/>
            <person name="Tice H."/>
            <person name="Tsai M."/>
            <person name="Ustaszewska A."/>
            <person name="Vo N."/>
            <person name="Wagner M."/>
            <person name="Wheeler J."/>
            <person name="Wu K."/>
            <person name="Xie G."/>
            <person name="Yang J."/>
            <person name="Dubchak I."/>
            <person name="Furey T.S."/>
            <person name="DeJong P."/>
            <person name="Dickson M."/>
            <person name="Gordon D."/>
            <person name="Eichler E.E."/>
            <person name="Pennacchio L.A."/>
            <person name="Richardson P."/>
            <person name="Stubbs L."/>
            <person name="Rokhsar D.S."/>
            <person name="Myers R.M."/>
            <person name="Rubin E.M."/>
            <person name="Lucas S.M."/>
        </authorList>
    </citation>
    <scope>NUCLEOTIDE SEQUENCE [LARGE SCALE GENOMIC DNA]</scope>
</reference>
<reference key="7">
    <citation type="journal article" date="2004" name="Genome Res.">
        <title>The status, quality, and expansion of the NIH full-length cDNA project: the Mammalian Gene Collection (MGC).</title>
        <authorList>
            <consortium name="The MGC Project Team"/>
        </authorList>
    </citation>
    <scope>NUCLEOTIDE SEQUENCE [LARGE SCALE MRNA] OF 22-528 (ISOFORM 2)</scope>
    <scope>VARIANT THR-291</scope>
    <source>
        <tissue>Lung</tissue>
    </source>
</reference>
<reference key="8">
    <citation type="journal article" date="2003" name="Nat. Biotechnol.">
        <title>Exploring proteomes and analyzing protein processing by mass spectrometric identification of sorted N-terminal peptides.</title>
        <authorList>
            <person name="Gevaert K."/>
            <person name="Goethals M."/>
            <person name="Martens L."/>
            <person name="Van Damme J."/>
            <person name="Staes A."/>
            <person name="Thomas G.R."/>
            <person name="Vandekerckhove J."/>
        </authorList>
    </citation>
    <scope>PROTEIN SEQUENCE OF 15-21</scope>
    <source>
        <tissue>Platelet</tissue>
    </source>
</reference>
<reference key="9">
    <citation type="journal article" date="2003" name="Am. J. Hum. Genet.">
        <title>Mutations in PRKCSH cause isolated autosomal dominant polycystic liver disease.</title>
        <authorList>
            <person name="Li A."/>
            <person name="Davila S."/>
            <person name="Furu L."/>
            <person name="Qian Q."/>
            <person name="Tian X."/>
            <person name="Kamath P.S."/>
            <person name="King B.F."/>
            <person name="Torres V.E."/>
            <person name="Somlo S."/>
        </authorList>
    </citation>
    <scope>INVOLVEMENT IN PCLD1</scope>
</reference>
<reference key="10">
    <citation type="journal article" date="2003" name="Nat. Genet.">
        <title>Germline mutations in PRKCSH are associated with autosomal dominant polycystic liver disease.</title>
        <authorList>
            <person name="Drenth J.P.H."/>
            <person name="te Morsche R.H.M."/>
            <person name="Smink R."/>
            <person name="Bonifacino J.S."/>
            <person name="Jansen J.B.M.J."/>
        </authorList>
    </citation>
    <scope>INVOLVEMENT IN PCLD1</scope>
</reference>
<reference key="11">
    <citation type="journal article" date="2011" name="BMC Syst. Biol.">
        <title>Initial characterization of the human central proteome.</title>
        <authorList>
            <person name="Burkard T.R."/>
            <person name="Planyavsky M."/>
            <person name="Kaupe I."/>
            <person name="Breitwieser F.P."/>
            <person name="Buerckstuemmer T."/>
            <person name="Bennett K.L."/>
            <person name="Superti-Furga G."/>
            <person name="Colinge J."/>
        </authorList>
    </citation>
    <scope>IDENTIFICATION BY MASS SPECTROMETRY [LARGE SCALE ANALYSIS]</scope>
</reference>
<reference key="12">
    <citation type="journal article" date="2014" name="J. Proteomics">
        <title>An enzyme assisted RP-RPLC approach for in-depth analysis of human liver phosphoproteome.</title>
        <authorList>
            <person name="Bian Y."/>
            <person name="Song C."/>
            <person name="Cheng K."/>
            <person name="Dong M."/>
            <person name="Wang F."/>
            <person name="Huang J."/>
            <person name="Sun D."/>
            <person name="Wang L."/>
            <person name="Ye M."/>
            <person name="Zou H."/>
        </authorList>
    </citation>
    <scope>IDENTIFICATION BY MASS SPECTROMETRY [LARGE SCALE ANALYSIS]</scope>
    <source>
        <tissue>Liver</tissue>
    </source>
</reference>
<reference key="13">
    <citation type="journal article" date="2015" name="Cell">
        <title>A single kinase generates the majority of the secreted phosphoproteome.</title>
        <authorList>
            <person name="Tagliabracci V.S."/>
            <person name="Wiley S.E."/>
            <person name="Guo X."/>
            <person name="Kinch L.N."/>
            <person name="Durrant E."/>
            <person name="Wen J."/>
            <person name="Xiao J."/>
            <person name="Cui J."/>
            <person name="Nguyen K.B."/>
            <person name="Engel J.L."/>
            <person name="Coon J.J."/>
            <person name="Grishin N."/>
            <person name="Pinna L.A."/>
            <person name="Pagliarini D.J."/>
            <person name="Dixon J.E."/>
        </authorList>
    </citation>
    <scope>PHOSPHORYLATION AT SER-24 AND SER-168</scope>
</reference>
<reference key="14">
    <citation type="journal article" date="2015" name="Proteomics">
        <title>N-terminome analysis of the human mitochondrial proteome.</title>
        <authorList>
            <person name="Vaca Jacome A.S."/>
            <person name="Rabilloud T."/>
            <person name="Schaeffer-Reiss C."/>
            <person name="Rompais M."/>
            <person name="Ayoub D."/>
            <person name="Lane L."/>
            <person name="Bairoch A."/>
            <person name="Van Dorsselaer A."/>
            <person name="Carapito C."/>
        </authorList>
    </citation>
    <scope>IDENTIFICATION BY MASS SPECTROMETRY [LARGE SCALE ANALYSIS]</scope>
</reference>
<reference key="15">
    <citation type="journal article" date="2017" name="J. Clin. Invest.">
        <title>Isolated polycystic liver disease genes define effectors of polycystin-1 function.</title>
        <authorList>
            <person name="Besse W."/>
            <person name="Dong K."/>
            <person name="Choi J."/>
            <person name="Punia S."/>
            <person name="Fedeles S.V."/>
            <person name="Choi M."/>
            <person name="Gallagher A.R."/>
            <person name="Huang E.B."/>
            <person name="Gulati A."/>
            <person name="Knight J."/>
            <person name="Mane S."/>
            <person name="Tahvanainen E."/>
            <person name="Tahvanainen P."/>
            <person name="Sanna-Cherchi S."/>
            <person name="Lifton R.P."/>
            <person name="Watnick T."/>
            <person name="Pei Y.P."/>
            <person name="Torres V.E."/>
            <person name="Somlo S."/>
        </authorList>
    </citation>
    <scope>INVOLVEMENT IN PCLD1</scope>
    <scope>VARIANTS PCLD1 18-LYS--LEU-528 DEL; 156-GLN--LEU-528 DEL; 198-TRP--LEU-528 DEL; 414-GLN--LEU-528 DEL AND 423-TYR--LEU-528 DEL</scope>
</reference>
<proteinExistence type="evidence at protein level"/>
<sequence length="528" mass="59425">MLLPLLLLLPMCWAVEVKRPRGVSLTNHHFYDESKPFTCLDGSATIPFDQVNDDYCDCKDGSDEPGTAACPNGSFHCTNTGYKPLYIPSNRVNDGVCDCCDGTDEYNSGVICENTCKEKGRKERESLQQMAEVTREGFRLKKILIEDWKKAREEKQKKLIELQAGKKSLEDQVEMLRTVKEEAEKPEREAKEQHQKLWEEQLAAAKAQQEQELAADAFKELDDDMDGTVSVTELQTHPELDTDGDGALSEAEAQALLSGDTQTDATSFYDRVWAAIRDKYRSEALPTDLPAPSAPDLTEPKEEQPPVPSSPTEEEEEEEEEEEEEAEEEEEEEDSEEAPPPLSPPQPASPAEEDKMPPYDEQTQAFIDAAQEARNKFEEAERSLKDMEESIRNLEQEISFDFGPNGEFAYLYSQCYELTTNEYVYRLCPFKLVSQKPKLGGSPTSLGTWGSWIGPDHDKFSAMKYEQGTGCWQGPNRSTTVRLLCGKETMVTSTTEPSRCEYLMELMTPAACPEPPPEAPTEDDHDEL</sequence>
<gene>
    <name evidence="19 22" type="primary">PRKCSH</name>
    <name type="synonym">G19P1</name>
</gene>
<keyword id="KW-0002">3D-structure</keyword>
<keyword id="KW-0025">Alternative splicing</keyword>
<keyword id="KW-0106">Calcium</keyword>
<keyword id="KW-0903">Direct protein sequencing</keyword>
<keyword id="KW-0225">Disease variant</keyword>
<keyword id="KW-1015">Disulfide bond</keyword>
<keyword id="KW-0256">Endoplasmic reticulum</keyword>
<keyword id="KW-0325">Glycoprotein</keyword>
<keyword id="KW-0479">Metal-binding</keyword>
<keyword id="KW-0597">Phosphoprotein</keyword>
<keyword id="KW-1267">Proteomics identification</keyword>
<keyword id="KW-1185">Reference proteome</keyword>
<keyword id="KW-0677">Repeat</keyword>
<keyword id="KW-0732">Signal</keyword>
<feature type="signal peptide" evidence="11">
    <location>
        <begin position="1"/>
        <end position="14"/>
    </location>
</feature>
<feature type="chain" id="PRO_0000004143" description="Glucosidase 2 subunit beta">
    <location>
        <begin position="15"/>
        <end position="528"/>
    </location>
</feature>
<feature type="domain" description="LDL-receptor class A 1" evidence="3">
    <location>
        <begin position="37"/>
        <end position="71"/>
    </location>
</feature>
<feature type="domain" description="LDL-receptor class A 2" evidence="3">
    <location>
        <begin position="72"/>
        <end position="113"/>
    </location>
</feature>
<feature type="domain" description="EF-hand 1" evidence="4">
    <location>
        <begin position="209"/>
        <end position="244"/>
    </location>
</feature>
<feature type="domain" description="EF-hand 2" evidence="20">
    <location>
        <begin position="245"/>
        <end position="290"/>
    </location>
</feature>
<feature type="domain" description="MRH" evidence="5">
    <location>
        <begin position="413"/>
        <end position="514"/>
    </location>
</feature>
<feature type="region of interest" description="Disordered" evidence="7">
    <location>
        <begin position="234"/>
        <end position="266"/>
    </location>
</feature>
<feature type="region of interest" description="Disordered" evidence="7">
    <location>
        <begin position="281"/>
        <end position="357"/>
    </location>
</feature>
<feature type="short sequence motif" description="Prevents secretion from ER" evidence="6 8">
    <location>
        <begin position="525"/>
        <end position="528"/>
    </location>
</feature>
<feature type="compositionally biased region" description="Low complexity" evidence="7">
    <location>
        <begin position="247"/>
        <end position="258"/>
    </location>
</feature>
<feature type="compositionally biased region" description="Acidic residues" evidence="7">
    <location>
        <begin position="312"/>
        <end position="337"/>
    </location>
</feature>
<feature type="compositionally biased region" description="Pro residues" evidence="7">
    <location>
        <begin position="338"/>
        <end position="348"/>
    </location>
</feature>
<feature type="binding site" evidence="1">
    <location>
        <position position="49"/>
    </location>
    <ligand>
        <name>substrate</name>
        <note>ligand shared with catalytic subunit</note>
    </ligand>
</feature>
<feature type="binding site" evidence="1">
    <location>
        <position position="50"/>
    </location>
    <ligand>
        <name>Ca(2+)</name>
        <dbReference type="ChEBI" id="CHEBI:29108"/>
        <label>1</label>
    </ligand>
</feature>
<feature type="binding site" evidence="1">
    <location>
        <position position="53"/>
    </location>
    <ligand>
        <name>Ca(2+)</name>
        <dbReference type="ChEBI" id="CHEBI:29108"/>
        <label>1</label>
    </ligand>
</feature>
<feature type="binding site" evidence="1">
    <location>
        <position position="53"/>
    </location>
    <ligand>
        <name>substrate</name>
        <note>ligand shared with catalytic subunit</note>
    </ligand>
</feature>
<feature type="binding site" evidence="1">
    <location>
        <position position="55"/>
    </location>
    <ligand>
        <name>Ca(2+)</name>
        <dbReference type="ChEBI" id="CHEBI:29108"/>
        <label>1</label>
    </ligand>
</feature>
<feature type="binding site" evidence="1">
    <location>
        <position position="57"/>
    </location>
    <ligand>
        <name>Ca(2+)</name>
        <dbReference type="ChEBI" id="CHEBI:29108"/>
        <label>1</label>
    </ligand>
</feature>
<feature type="binding site" evidence="1">
    <location>
        <position position="63"/>
    </location>
    <ligand>
        <name>Ca(2+)</name>
        <dbReference type="ChEBI" id="CHEBI:29108"/>
        <label>1</label>
    </ligand>
</feature>
<feature type="binding site" evidence="1">
    <location>
        <position position="64"/>
    </location>
    <ligand>
        <name>Ca(2+)</name>
        <dbReference type="ChEBI" id="CHEBI:29108"/>
        <label>1</label>
    </ligand>
</feature>
<feature type="binding site" evidence="1">
    <location>
        <position position="91"/>
    </location>
    <ligand>
        <name>Ca(2+)</name>
        <dbReference type="ChEBI" id="CHEBI:29108"/>
        <label>2</label>
    </ligand>
</feature>
<feature type="binding site" evidence="1">
    <location>
        <position position="94"/>
    </location>
    <ligand>
        <name>Ca(2+)</name>
        <dbReference type="ChEBI" id="CHEBI:29108"/>
        <label>2</label>
    </ligand>
</feature>
<feature type="binding site" evidence="1">
    <location>
        <position position="96"/>
    </location>
    <ligand>
        <name>Ca(2+)</name>
        <dbReference type="ChEBI" id="CHEBI:29108"/>
        <label>2</label>
    </ligand>
</feature>
<feature type="binding site" evidence="1">
    <location>
        <position position="98"/>
    </location>
    <ligand>
        <name>Ca(2+)</name>
        <dbReference type="ChEBI" id="CHEBI:29108"/>
        <label>2</label>
    </ligand>
</feature>
<feature type="binding site" evidence="1">
    <location>
        <position position="104"/>
    </location>
    <ligand>
        <name>Ca(2+)</name>
        <dbReference type="ChEBI" id="CHEBI:29108"/>
        <label>2</label>
    </ligand>
</feature>
<feature type="binding site" evidence="1">
    <location>
        <position position="105"/>
    </location>
    <ligand>
        <name>Ca(2+)</name>
        <dbReference type="ChEBI" id="CHEBI:29108"/>
        <label>2</label>
    </ligand>
</feature>
<feature type="binding site" evidence="4">
    <location>
        <position position="222"/>
    </location>
    <ligand>
        <name>Ca(2+)</name>
        <dbReference type="ChEBI" id="CHEBI:29108"/>
        <label>3</label>
    </ligand>
</feature>
<feature type="binding site" evidence="4">
    <location>
        <position position="224"/>
    </location>
    <ligand>
        <name>Ca(2+)</name>
        <dbReference type="ChEBI" id="CHEBI:29108"/>
        <label>3</label>
    </ligand>
</feature>
<feature type="binding site" evidence="4">
    <location>
        <position position="226"/>
    </location>
    <ligand>
        <name>Ca(2+)</name>
        <dbReference type="ChEBI" id="CHEBI:29108"/>
        <label>3</label>
    </ligand>
</feature>
<feature type="binding site" evidence="4">
    <location>
        <position position="228"/>
    </location>
    <ligand>
        <name>Ca(2+)</name>
        <dbReference type="ChEBI" id="CHEBI:29108"/>
        <label>3</label>
    </ligand>
</feature>
<feature type="binding site" evidence="4">
    <location>
        <position position="233"/>
    </location>
    <ligand>
        <name>Ca(2+)</name>
        <dbReference type="ChEBI" id="CHEBI:29108"/>
        <label>3</label>
    </ligand>
</feature>
<feature type="modified residue" description="Phosphoserine; by FAM20C" evidence="13">
    <location>
        <position position="24"/>
    </location>
</feature>
<feature type="modified residue" description="Phosphoserine; by PKC" evidence="2">
    <location>
        <position position="89"/>
    </location>
</feature>
<feature type="modified residue" description="N6-succinyllysine" evidence="1">
    <location>
        <position position="166"/>
    </location>
</feature>
<feature type="modified residue" description="Phosphoserine; by FAM20C" evidence="13">
    <location>
        <position position="168"/>
    </location>
</feature>
<feature type="modified residue" description="Phosphoserine; by PKC" evidence="2">
    <location>
        <position position="383"/>
    </location>
</feature>
<feature type="modified residue" description="Phosphoserine; by PKC" evidence="2">
    <location>
        <position position="390"/>
    </location>
</feature>
<feature type="modified residue" description="Phosphoserine; by PKC" evidence="2">
    <location>
        <position position="434"/>
    </location>
</feature>
<feature type="glycosylation site" description="N-linked (GlcNAc...) asparagine" evidence="2">
    <location>
        <position position="72"/>
    </location>
</feature>
<feature type="glycosylation site" description="N-linked (GlcNAc...) asparagine" evidence="2">
    <location>
        <position position="476"/>
    </location>
</feature>
<feature type="disulfide bond" evidence="1">
    <location>
        <begin position="39"/>
        <end position="58"/>
    </location>
</feature>
<feature type="disulfide bond" evidence="1">
    <location>
        <begin position="56"/>
        <end position="70"/>
    </location>
</feature>
<feature type="disulfide bond" evidence="1">
    <location>
        <begin position="77"/>
        <end position="99"/>
    </location>
</feature>
<feature type="disulfide bond" evidence="1">
    <location>
        <begin position="97"/>
        <end position="112"/>
    </location>
</feature>
<feature type="disulfide bond" evidence="1">
    <location>
        <begin position="100"/>
        <end position="116"/>
    </location>
</feature>
<feature type="disulfide bond" evidence="5">
    <location>
        <begin position="415"/>
        <end position="428"/>
    </location>
</feature>
<feature type="disulfide bond" evidence="5">
    <location>
        <begin position="471"/>
        <end position="500"/>
    </location>
</feature>
<feature type="disulfide bond" evidence="5">
    <location>
        <begin position="485"/>
        <end position="512"/>
    </location>
</feature>
<feature type="splice variant" id="VSP_043749" description="In isoform 2." evidence="16 17">
    <original>EAPPPLSPPQ</original>
    <variation>VQGEQPK</variation>
    <location>
        <begin position="337"/>
        <end position="346"/>
    </location>
</feature>
<feature type="sequence variant" id="VAR_080939" description="In PCLD1." evidence="14">
    <location>
        <begin position="18"/>
        <end position="528"/>
    </location>
</feature>
<feature type="sequence variant" id="VAR_028761" description="In dbSNP:rs10406672.">
    <original>S</original>
    <variation>N</variation>
    <location>
        <position position="74"/>
    </location>
</feature>
<feature type="sequence variant" id="VAR_080940" description="In PCLD1." evidence="14">
    <location>
        <begin position="156"/>
        <end position="528"/>
    </location>
</feature>
<feature type="sequence variant" id="VAR_080941" description="In PCLD1." evidence="14">
    <location>
        <begin position="198"/>
        <end position="528"/>
    </location>
</feature>
<feature type="sequence variant" id="VAR_028762" description="In dbSNP:rs11557488." evidence="12 15">
    <original>A</original>
    <variation>T</variation>
    <location>
        <position position="291"/>
    </location>
</feature>
<feature type="sequence variant" id="VAR_048658" description="In dbSNP:rs35847588.">
    <original>A</original>
    <variation>G</variation>
    <location>
        <position position="338"/>
    </location>
</feature>
<feature type="sequence variant" id="VAR_080942" description="In PCLD1." evidence="14">
    <location>
        <begin position="414"/>
        <end position="528"/>
    </location>
</feature>
<feature type="sequence variant" id="VAR_080943" description="In PCLD1." evidence="14">
    <location>
        <begin position="423"/>
        <end position="528"/>
    </location>
</feature>
<feature type="sequence conflict" description="In Ref. 1; AAA52493, 2; AAA98668, 4; AAP88860 and 6; AAH13586." evidence="20" ref="1 2 4 6">
    <location>
        <position position="325"/>
    </location>
</feature>
<feature type="helix" evidence="23">
    <location>
        <begin position="26"/>
        <end position="28"/>
    </location>
</feature>
<feature type="strand" evidence="23">
    <location>
        <begin position="33"/>
        <end position="35"/>
    </location>
</feature>
<feature type="strand" evidence="23">
    <location>
        <begin position="40"/>
        <end position="43"/>
    </location>
</feature>
<feature type="helix" evidence="23">
    <location>
        <begin position="48"/>
        <end position="50"/>
    </location>
</feature>
<feature type="strand" evidence="23">
    <location>
        <begin position="53"/>
        <end position="55"/>
    </location>
</feature>
<feature type="strand" evidence="23">
    <location>
        <begin position="59"/>
        <end position="61"/>
    </location>
</feature>
<feature type="strand" evidence="23">
    <location>
        <begin position="65"/>
        <end position="67"/>
    </location>
</feature>
<feature type="strand" evidence="23">
    <location>
        <begin position="74"/>
        <end position="77"/>
    </location>
</feature>
<feature type="strand" evidence="24">
    <location>
        <begin position="80"/>
        <end position="82"/>
    </location>
</feature>
<feature type="strand" evidence="23">
    <location>
        <begin position="85"/>
        <end position="88"/>
    </location>
</feature>
<feature type="helix" evidence="23">
    <location>
        <begin position="89"/>
        <end position="91"/>
    </location>
</feature>
<feature type="strand" evidence="23">
    <location>
        <begin position="94"/>
        <end position="96"/>
    </location>
</feature>
<feature type="strand" evidence="23">
    <location>
        <begin position="99"/>
        <end position="101"/>
    </location>
</feature>
<feature type="strand" evidence="23">
    <location>
        <begin position="106"/>
        <end position="109"/>
    </location>
</feature>
<protein>
    <recommendedName>
        <fullName>Glucosidase 2 subunit beta</fullName>
    </recommendedName>
    <alternativeName>
        <fullName evidence="18">80K-H protein</fullName>
    </alternativeName>
    <alternativeName>
        <fullName>Glucosidase II subunit beta</fullName>
    </alternativeName>
    <alternativeName>
        <fullName>Protein kinase C substrate 60.1 kDa protein heavy chain</fullName>
        <shortName>PKCSH</shortName>
    </alternativeName>
</protein>
<evidence type="ECO:0000250" key="1">
    <source>
        <dbReference type="UniProtKB" id="O08795"/>
    </source>
</evidence>
<evidence type="ECO:0000255" key="2"/>
<evidence type="ECO:0000255" key="3">
    <source>
        <dbReference type="PROSITE-ProRule" id="PRU00124"/>
    </source>
</evidence>
<evidence type="ECO:0000255" key="4">
    <source>
        <dbReference type="PROSITE-ProRule" id="PRU00448"/>
    </source>
</evidence>
<evidence type="ECO:0000255" key="5">
    <source>
        <dbReference type="PROSITE-ProRule" id="PRU01262"/>
    </source>
</evidence>
<evidence type="ECO:0000255" key="6">
    <source>
        <dbReference type="PROSITE-ProRule" id="PRU10138"/>
    </source>
</evidence>
<evidence type="ECO:0000256" key="7">
    <source>
        <dbReference type="SAM" id="MobiDB-lite"/>
    </source>
</evidence>
<evidence type="ECO:0000269" key="8">
    <source>
    </source>
</evidence>
<evidence type="ECO:0000269" key="9">
    <source>
    </source>
</evidence>
<evidence type="ECO:0000269" key="10">
    <source>
    </source>
</evidence>
<evidence type="ECO:0000269" key="11">
    <source>
    </source>
</evidence>
<evidence type="ECO:0000269" key="12">
    <source>
    </source>
</evidence>
<evidence type="ECO:0000269" key="13">
    <source>
    </source>
</evidence>
<evidence type="ECO:0000269" key="14">
    <source>
    </source>
</evidence>
<evidence type="ECO:0000269" key="15">
    <source ref="4"/>
</evidence>
<evidence type="ECO:0000303" key="16">
    <source>
    </source>
</evidence>
<evidence type="ECO:0000303" key="17">
    <source>
    </source>
</evidence>
<evidence type="ECO:0000303" key="18">
    <source>
    </source>
</evidence>
<evidence type="ECO:0000303" key="19">
    <source>
    </source>
</evidence>
<evidence type="ECO:0000305" key="20"/>
<evidence type="ECO:0000305" key="21">
    <source>
    </source>
</evidence>
<evidence type="ECO:0000312" key="22">
    <source>
        <dbReference type="HGNC" id="HGNC:9411"/>
    </source>
</evidence>
<evidence type="ECO:0007829" key="23">
    <source>
        <dbReference type="PDB" id="8D43"/>
    </source>
</evidence>
<evidence type="ECO:0007829" key="24">
    <source>
        <dbReference type="PDB" id="8EMR"/>
    </source>
</evidence>
<organism>
    <name type="scientific">Homo sapiens</name>
    <name type="common">Human</name>
    <dbReference type="NCBI Taxonomy" id="9606"/>
    <lineage>
        <taxon>Eukaryota</taxon>
        <taxon>Metazoa</taxon>
        <taxon>Chordata</taxon>
        <taxon>Craniata</taxon>
        <taxon>Vertebrata</taxon>
        <taxon>Euteleostomi</taxon>
        <taxon>Mammalia</taxon>
        <taxon>Eutheria</taxon>
        <taxon>Euarchontoglires</taxon>
        <taxon>Primates</taxon>
        <taxon>Haplorrhini</taxon>
        <taxon>Catarrhini</taxon>
        <taxon>Hominidae</taxon>
        <taxon>Homo</taxon>
    </lineage>
</organism>